<accession>Q804S6</accession>
<proteinExistence type="evidence at transcript level"/>
<protein>
    <recommendedName>
        <fullName>Homeobox protein EMX1</fullName>
    </recommendedName>
    <alternativeName>
        <fullName>Empty spiracles homolog 1</fullName>
    </alternativeName>
    <alternativeName>
        <fullName>Empty spiracles-like protein 1</fullName>
    </alternativeName>
</protein>
<dbReference type="EMBL" id="AF534523">
    <property type="protein sequence ID" value="AAO25957.1"/>
    <property type="molecule type" value="mRNA"/>
</dbReference>
<dbReference type="RefSeq" id="NP_937787.1">
    <property type="nucleotide sequence ID" value="NM_198144.2"/>
</dbReference>
<dbReference type="SMR" id="Q804S6"/>
<dbReference type="FunCoup" id="Q804S6">
    <property type="interactions" value="56"/>
</dbReference>
<dbReference type="STRING" id="7955.ENSDARP00000057809"/>
<dbReference type="PaxDb" id="7955-ENSDARP00000057809"/>
<dbReference type="Ensembl" id="ENSDART00000057810">
    <property type="protein sequence ID" value="ENSDARP00000057809"/>
    <property type="gene ID" value="ENSDARG00000039569"/>
</dbReference>
<dbReference type="GeneID" id="378964"/>
<dbReference type="KEGG" id="dre:378964"/>
<dbReference type="AGR" id="ZFIN:ZDB-GENE-031007-7"/>
<dbReference type="CTD" id="2016"/>
<dbReference type="ZFIN" id="ZDB-GENE-031007-7">
    <property type="gene designation" value="emx1"/>
</dbReference>
<dbReference type="eggNOG" id="KOG0843">
    <property type="taxonomic scope" value="Eukaryota"/>
</dbReference>
<dbReference type="HOGENOM" id="CLU_049668_1_0_1"/>
<dbReference type="InParanoid" id="Q804S6"/>
<dbReference type="OMA" id="SPHPFFG"/>
<dbReference type="OrthoDB" id="6159439at2759"/>
<dbReference type="PhylomeDB" id="Q804S6"/>
<dbReference type="TreeFam" id="TF317015"/>
<dbReference type="PRO" id="PR:Q804S6"/>
<dbReference type="Proteomes" id="UP000000437">
    <property type="component" value="Chromosome 13"/>
</dbReference>
<dbReference type="Bgee" id="ENSDARG00000039569">
    <property type="expression patterns" value="Expressed in pallium and 34 other cell types or tissues"/>
</dbReference>
<dbReference type="ExpressionAtlas" id="Q804S6">
    <property type="expression patterns" value="baseline"/>
</dbReference>
<dbReference type="GO" id="GO:0005634">
    <property type="term" value="C:nucleus"/>
    <property type="evidence" value="ECO:0000318"/>
    <property type="project" value="GO_Central"/>
</dbReference>
<dbReference type="GO" id="GO:0000981">
    <property type="term" value="F:DNA-binding transcription factor activity, RNA polymerase II-specific"/>
    <property type="evidence" value="ECO:0000318"/>
    <property type="project" value="GO_Central"/>
</dbReference>
<dbReference type="GO" id="GO:0000978">
    <property type="term" value="F:RNA polymerase II cis-regulatory region sequence-specific DNA binding"/>
    <property type="evidence" value="ECO:0000318"/>
    <property type="project" value="GO_Central"/>
</dbReference>
<dbReference type="GO" id="GO:0007420">
    <property type="term" value="P:brain development"/>
    <property type="evidence" value="ECO:0000318"/>
    <property type="project" value="GO_Central"/>
</dbReference>
<dbReference type="GO" id="GO:0007417">
    <property type="term" value="P:central nervous system development"/>
    <property type="evidence" value="ECO:0000318"/>
    <property type="project" value="GO_Central"/>
</dbReference>
<dbReference type="GO" id="GO:0030182">
    <property type="term" value="P:neuron differentiation"/>
    <property type="evidence" value="ECO:0000318"/>
    <property type="project" value="GO_Central"/>
</dbReference>
<dbReference type="GO" id="GO:0035777">
    <property type="term" value="P:pronephric distal tubule development"/>
    <property type="evidence" value="ECO:0000315"/>
    <property type="project" value="ZFIN"/>
</dbReference>
<dbReference type="GO" id="GO:0006357">
    <property type="term" value="P:regulation of transcription by RNA polymerase II"/>
    <property type="evidence" value="ECO:0000318"/>
    <property type="project" value="GO_Central"/>
</dbReference>
<dbReference type="CDD" id="cd00086">
    <property type="entry name" value="homeodomain"/>
    <property type="match status" value="1"/>
</dbReference>
<dbReference type="FunFam" id="1.10.10.60:FF:000299">
    <property type="entry name" value="Empty spiracles homeobox 3"/>
    <property type="match status" value="1"/>
</dbReference>
<dbReference type="Gene3D" id="1.10.10.60">
    <property type="entry name" value="Homeodomain-like"/>
    <property type="match status" value="1"/>
</dbReference>
<dbReference type="InterPro" id="IPR050877">
    <property type="entry name" value="EMX-VAX-Noto_Homeobox_TFs"/>
</dbReference>
<dbReference type="InterPro" id="IPR001356">
    <property type="entry name" value="HD"/>
</dbReference>
<dbReference type="InterPro" id="IPR020479">
    <property type="entry name" value="HD_metazoa"/>
</dbReference>
<dbReference type="InterPro" id="IPR017970">
    <property type="entry name" value="Homeobox_CS"/>
</dbReference>
<dbReference type="InterPro" id="IPR009057">
    <property type="entry name" value="Homeodomain-like_sf"/>
</dbReference>
<dbReference type="InterPro" id="IPR000047">
    <property type="entry name" value="HTH_motif"/>
</dbReference>
<dbReference type="PANTHER" id="PTHR24339">
    <property type="entry name" value="HOMEOBOX PROTEIN EMX-RELATED"/>
    <property type="match status" value="1"/>
</dbReference>
<dbReference type="PANTHER" id="PTHR24339:SF26">
    <property type="entry name" value="HOMEOBOX PROTEIN EMX1"/>
    <property type="match status" value="1"/>
</dbReference>
<dbReference type="Pfam" id="PF00046">
    <property type="entry name" value="Homeodomain"/>
    <property type="match status" value="1"/>
</dbReference>
<dbReference type="PRINTS" id="PR00024">
    <property type="entry name" value="HOMEOBOX"/>
</dbReference>
<dbReference type="PRINTS" id="PR00031">
    <property type="entry name" value="HTHREPRESSR"/>
</dbReference>
<dbReference type="SMART" id="SM00389">
    <property type="entry name" value="HOX"/>
    <property type="match status" value="1"/>
</dbReference>
<dbReference type="SUPFAM" id="SSF46689">
    <property type="entry name" value="Homeodomain-like"/>
    <property type="match status" value="1"/>
</dbReference>
<dbReference type="PROSITE" id="PS00027">
    <property type="entry name" value="HOMEOBOX_1"/>
    <property type="match status" value="1"/>
</dbReference>
<dbReference type="PROSITE" id="PS50071">
    <property type="entry name" value="HOMEOBOX_2"/>
    <property type="match status" value="1"/>
</dbReference>
<gene>
    <name type="primary">emx1</name>
</gene>
<comment type="function">
    <text evidence="1">May function in combinations with OTX1/2 to specify cell fates in the developing central nervous system.</text>
</comment>
<comment type="subcellular location">
    <subcellularLocation>
        <location evidence="4">Nucleus</location>
    </subcellularLocation>
</comment>
<comment type="similarity">
    <text evidence="4">Belongs to the EMX homeobox family.</text>
</comment>
<sequence length="231" mass="26508">MFSATGKRCFTIESLVAKESPITLEDPIRPTALSYSAPADSFLNGYQSPAGRALYPNPELVFSETVNHAPLSMHPHQLGSAPLQHPHFFGTQHREPLNFYPWVLRNRFFGHRFQGNDVSQDTLLLHGPFARKPKRIRTAFSPSQLLRLERAFEKNHYVVGAERKQLANSLSLSETQVKVWFQNRRTKYKRQKLEEEGPECTQKKKGNHHINRWRIATKQTGSEDIDVMSDA</sequence>
<feature type="chain" id="PRO_0000270143" description="Homeobox protein EMX1">
    <location>
        <begin position="1"/>
        <end position="231"/>
    </location>
</feature>
<feature type="DNA-binding region" description="Homeobox" evidence="2">
    <location>
        <begin position="133"/>
        <end position="192"/>
    </location>
</feature>
<feature type="region of interest" description="Disordered" evidence="3">
    <location>
        <begin position="193"/>
        <end position="231"/>
    </location>
</feature>
<feature type="compositionally biased region" description="Basic residues" evidence="3">
    <location>
        <begin position="203"/>
        <end position="212"/>
    </location>
</feature>
<name>EMX1_DANRE</name>
<keyword id="KW-0217">Developmental protein</keyword>
<keyword id="KW-0238">DNA-binding</keyword>
<keyword id="KW-0371">Homeobox</keyword>
<keyword id="KW-0539">Nucleus</keyword>
<keyword id="KW-1185">Reference proteome</keyword>
<evidence type="ECO:0000250" key="1"/>
<evidence type="ECO:0000255" key="2">
    <source>
        <dbReference type="PROSITE-ProRule" id="PRU00108"/>
    </source>
</evidence>
<evidence type="ECO:0000256" key="3">
    <source>
        <dbReference type="SAM" id="MobiDB-lite"/>
    </source>
</evidence>
<evidence type="ECO:0000305" key="4"/>
<reference key="1">
    <citation type="journal article" date="2002" name="Gene Expr. Patterns">
        <title>Developmental expression of zebrafish emx1 during early embryogenesis.</title>
        <authorList>
            <person name="Kawahara A."/>
            <person name="Dawid I.B."/>
        </authorList>
    </citation>
    <scope>NUCLEOTIDE SEQUENCE [MRNA]</scope>
</reference>
<organism>
    <name type="scientific">Danio rerio</name>
    <name type="common">Zebrafish</name>
    <name type="synonym">Brachydanio rerio</name>
    <dbReference type="NCBI Taxonomy" id="7955"/>
    <lineage>
        <taxon>Eukaryota</taxon>
        <taxon>Metazoa</taxon>
        <taxon>Chordata</taxon>
        <taxon>Craniata</taxon>
        <taxon>Vertebrata</taxon>
        <taxon>Euteleostomi</taxon>
        <taxon>Actinopterygii</taxon>
        <taxon>Neopterygii</taxon>
        <taxon>Teleostei</taxon>
        <taxon>Ostariophysi</taxon>
        <taxon>Cypriniformes</taxon>
        <taxon>Danionidae</taxon>
        <taxon>Danioninae</taxon>
        <taxon>Danio</taxon>
    </lineage>
</organism>